<protein>
    <recommendedName>
        <fullName evidence="2">Eukaryotic translation initiation factor 3 subunit C</fullName>
        <shortName evidence="2">eIF3c</shortName>
    </recommendedName>
    <alternativeName>
        <fullName evidence="2">Eukaryotic translation initiation factor 3 subunit 8</fullName>
    </alternativeName>
    <alternativeName>
        <fullName evidence="2">eIF3 p110</fullName>
    </alternativeName>
</protein>
<keyword id="KW-0007">Acetylation</keyword>
<keyword id="KW-0963">Cytoplasm</keyword>
<keyword id="KW-0396">Initiation factor</keyword>
<keyword id="KW-0597">Phosphoprotein</keyword>
<keyword id="KW-0648">Protein biosynthesis</keyword>
<keyword id="KW-1185">Reference proteome</keyword>
<name>EIF3C_MOUSE</name>
<organism>
    <name type="scientific">Mus musculus</name>
    <name type="common">Mouse</name>
    <dbReference type="NCBI Taxonomy" id="10090"/>
    <lineage>
        <taxon>Eukaryota</taxon>
        <taxon>Metazoa</taxon>
        <taxon>Chordata</taxon>
        <taxon>Craniata</taxon>
        <taxon>Vertebrata</taxon>
        <taxon>Euteleostomi</taxon>
        <taxon>Mammalia</taxon>
        <taxon>Eutheria</taxon>
        <taxon>Euarchontoglires</taxon>
        <taxon>Glires</taxon>
        <taxon>Rodentia</taxon>
        <taxon>Myomorpha</taxon>
        <taxon>Muroidea</taxon>
        <taxon>Muridae</taxon>
        <taxon>Murinae</taxon>
        <taxon>Mus</taxon>
        <taxon>Mus</taxon>
    </lineage>
</organism>
<reference key="1">
    <citation type="journal article" date="2005" name="Science">
        <title>The transcriptional landscape of the mammalian genome.</title>
        <authorList>
            <person name="Carninci P."/>
            <person name="Kasukawa T."/>
            <person name="Katayama S."/>
            <person name="Gough J."/>
            <person name="Frith M.C."/>
            <person name="Maeda N."/>
            <person name="Oyama R."/>
            <person name="Ravasi T."/>
            <person name="Lenhard B."/>
            <person name="Wells C."/>
            <person name="Kodzius R."/>
            <person name="Shimokawa K."/>
            <person name="Bajic V.B."/>
            <person name="Brenner S.E."/>
            <person name="Batalov S."/>
            <person name="Forrest A.R."/>
            <person name="Zavolan M."/>
            <person name="Davis M.J."/>
            <person name="Wilming L.G."/>
            <person name="Aidinis V."/>
            <person name="Allen J.E."/>
            <person name="Ambesi-Impiombato A."/>
            <person name="Apweiler R."/>
            <person name="Aturaliya R.N."/>
            <person name="Bailey T.L."/>
            <person name="Bansal M."/>
            <person name="Baxter L."/>
            <person name="Beisel K.W."/>
            <person name="Bersano T."/>
            <person name="Bono H."/>
            <person name="Chalk A.M."/>
            <person name="Chiu K.P."/>
            <person name="Choudhary V."/>
            <person name="Christoffels A."/>
            <person name="Clutterbuck D.R."/>
            <person name="Crowe M.L."/>
            <person name="Dalla E."/>
            <person name="Dalrymple B.P."/>
            <person name="de Bono B."/>
            <person name="Della Gatta G."/>
            <person name="di Bernardo D."/>
            <person name="Down T."/>
            <person name="Engstrom P."/>
            <person name="Fagiolini M."/>
            <person name="Faulkner G."/>
            <person name="Fletcher C.F."/>
            <person name="Fukushima T."/>
            <person name="Furuno M."/>
            <person name="Futaki S."/>
            <person name="Gariboldi M."/>
            <person name="Georgii-Hemming P."/>
            <person name="Gingeras T.R."/>
            <person name="Gojobori T."/>
            <person name="Green R.E."/>
            <person name="Gustincich S."/>
            <person name="Harbers M."/>
            <person name="Hayashi Y."/>
            <person name="Hensch T.K."/>
            <person name="Hirokawa N."/>
            <person name="Hill D."/>
            <person name="Huminiecki L."/>
            <person name="Iacono M."/>
            <person name="Ikeo K."/>
            <person name="Iwama A."/>
            <person name="Ishikawa T."/>
            <person name="Jakt M."/>
            <person name="Kanapin A."/>
            <person name="Katoh M."/>
            <person name="Kawasawa Y."/>
            <person name="Kelso J."/>
            <person name="Kitamura H."/>
            <person name="Kitano H."/>
            <person name="Kollias G."/>
            <person name="Krishnan S.P."/>
            <person name="Kruger A."/>
            <person name="Kummerfeld S.K."/>
            <person name="Kurochkin I.V."/>
            <person name="Lareau L.F."/>
            <person name="Lazarevic D."/>
            <person name="Lipovich L."/>
            <person name="Liu J."/>
            <person name="Liuni S."/>
            <person name="McWilliam S."/>
            <person name="Madan Babu M."/>
            <person name="Madera M."/>
            <person name="Marchionni L."/>
            <person name="Matsuda H."/>
            <person name="Matsuzawa S."/>
            <person name="Miki H."/>
            <person name="Mignone F."/>
            <person name="Miyake S."/>
            <person name="Morris K."/>
            <person name="Mottagui-Tabar S."/>
            <person name="Mulder N."/>
            <person name="Nakano N."/>
            <person name="Nakauchi H."/>
            <person name="Ng P."/>
            <person name="Nilsson R."/>
            <person name="Nishiguchi S."/>
            <person name="Nishikawa S."/>
            <person name="Nori F."/>
            <person name="Ohara O."/>
            <person name="Okazaki Y."/>
            <person name="Orlando V."/>
            <person name="Pang K.C."/>
            <person name="Pavan W.J."/>
            <person name="Pavesi G."/>
            <person name="Pesole G."/>
            <person name="Petrovsky N."/>
            <person name="Piazza S."/>
            <person name="Reed J."/>
            <person name="Reid J.F."/>
            <person name="Ring B.Z."/>
            <person name="Ringwald M."/>
            <person name="Rost B."/>
            <person name="Ruan Y."/>
            <person name="Salzberg S.L."/>
            <person name="Sandelin A."/>
            <person name="Schneider C."/>
            <person name="Schoenbach C."/>
            <person name="Sekiguchi K."/>
            <person name="Semple C.A."/>
            <person name="Seno S."/>
            <person name="Sessa L."/>
            <person name="Sheng Y."/>
            <person name="Shibata Y."/>
            <person name="Shimada H."/>
            <person name="Shimada K."/>
            <person name="Silva D."/>
            <person name="Sinclair B."/>
            <person name="Sperling S."/>
            <person name="Stupka E."/>
            <person name="Sugiura K."/>
            <person name="Sultana R."/>
            <person name="Takenaka Y."/>
            <person name="Taki K."/>
            <person name="Tammoja K."/>
            <person name="Tan S.L."/>
            <person name="Tang S."/>
            <person name="Taylor M.S."/>
            <person name="Tegner J."/>
            <person name="Teichmann S.A."/>
            <person name="Ueda H.R."/>
            <person name="van Nimwegen E."/>
            <person name="Verardo R."/>
            <person name="Wei C.L."/>
            <person name="Yagi K."/>
            <person name="Yamanishi H."/>
            <person name="Zabarovsky E."/>
            <person name="Zhu S."/>
            <person name="Zimmer A."/>
            <person name="Hide W."/>
            <person name="Bult C."/>
            <person name="Grimmond S.M."/>
            <person name="Teasdale R.D."/>
            <person name="Liu E.T."/>
            <person name="Brusic V."/>
            <person name="Quackenbush J."/>
            <person name="Wahlestedt C."/>
            <person name="Mattick J.S."/>
            <person name="Hume D.A."/>
            <person name="Kai C."/>
            <person name="Sasaki D."/>
            <person name="Tomaru Y."/>
            <person name="Fukuda S."/>
            <person name="Kanamori-Katayama M."/>
            <person name="Suzuki M."/>
            <person name="Aoki J."/>
            <person name="Arakawa T."/>
            <person name="Iida J."/>
            <person name="Imamura K."/>
            <person name="Itoh M."/>
            <person name="Kato T."/>
            <person name="Kawaji H."/>
            <person name="Kawagashira N."/>
            <person name="Kawashima T."/>
            <person name="Kojima M."/>
            <person name="Kondo S."/>
            <person name="Konno H."/>
            <person name="Nakano K."/>
            <person name="Ninomiya N."/>
            <person name="Nishio T."/>
            <person name="Okada M."/>
            <person name="Plessy C."/>
            <person name="Shibata K."/>
            <person name="Shiraki T."/>
            <person name="Suzuki S."/>
            <person name="Tagami M."/>
            <person name="Waki K."/>
            <person name="Watahiki A."/>
            <person name="Okamura-Oho Y."/>
            <person name="Suzuki H."/>
            <person name="Kawai J."/>
            <person name="Hayashizaki Y."/>
        </authorList>
    </citation>
    <scope>NUCLEOTIDE SEQUENCE [LARGE SCALE MRNA]</scope>
    <source>
        <strain>C57BL/6J</strain>
    </source>
</reference>
<reference key="2">
    <citation type="journal article" date="2004" name="Genome Res.">
        <title>The status, quality, and expansion of the NIH full-length cDNA project: the Mammalian Gene Collection (MGC).</title>
        <authorList>
            <consortium name="The MGC Project Team"/>
        </authorList>
    </citation>
    <scope>NUCLEOTIDE SEQUENCE [LARGE SCALE MRNA]</scope>
    <source>
        <strain>FVB/N</strain>
        <tissue>Eye</tissue>
        <tissue>Mammary tumor</tissue>
    </source>
</reference>
<reference key="3">
    <citation type="journal article" date="2007" name="EMBO J.">
        <title>Reconstitution reveals the functional core of mammalian eIF3.</title>
        <authorList>
            <person name="Masutani M."/>
            <person name="Sonenberg N."/>
            <person name="Yokoyama S."/>
            <person name="Imataka H."/>
        </authorList>
    </citation>
    <scope>FUNCTION</scope>
    <scope>CHARACTERIZATION OF THE EIF-3 COMPLEX</scope>
    <scope>IDENTIFICATION IN THE EIF-3 COMPLEX</scope>
    <scope>IDENTIFICATION BY MASS SPECTROMETRY</scope>
</reference>
<reference key="4">
    <citation type="journal article" date="2007" name="J. Proteome Res.">
        <title>A differential phosphoproteomic analysis of retinoic acid-treated P19 cells.</title>
        <authorList>
            <person name="Smith J.C."/>
            <person name="Duchesne M.A."/>
            <person name="Tozzi P."/>
            <person name="Ethier M."/>
            <person name="Figeys D."/>
        </authorList>
    </citation>
    <scope>PHOSPHORYLATION [LARGE SCALE ANALYSIS] AT SER-39</scope>
    <scope>IDENTIFICATION BY MASS SPECTROMETRY [LARGE SCALE ANALYSIS]</scope>
    <source>
        <tissue>Teratocarcinoma</tissue>
    </source>
</reference>
<reference key="5">
    <citation type="journal article" date="2007" name="Mol. Cell. Proteomics">
        <title>Qualitative and quantitative analyses of protein phosphorylation in naive and stimulated mouse synaptosomal preparations.</title>
        <authorList>
            <person name="Munton R.P."/>
            <person name="Tweedie-Cullen R."/>
            <person name="Livingstone-Zatchej M."/>
            <person name="Weinandy F."/>
            <person name="Waidelich M."/>
            <person name="Longo D."/>
            <person name="Gehrig P."/>
            <person name="Potthast F."/>
            <person name="Rutishauser D."/>
            <person name="Gerrits B."/>
            <person name="Panse C."/>
            <person name="Schlapbach R."/>
            <person name="Mansuy I.M."/>
        </authorList>
    </citation>
    <scope>IDENTIFICATION BY MASS SPECTROMETRY [LARGE SCALE ANALYSIS]</scope>
    <source>
        <tissue>Brain cortex</tissue>
    </source>
</reference>
<reference key="6">
    <citation type="journal article" date="2009" name="Mol. Cell. Proteomics">
        <title>Large scale localization of protein phosphorylation by use of electron capture dissociation mass spectrometry.</title>
        <authorList>
            <person name="Sweet S.M."/>
            <person name="Bailey C.M."/>
            <person name="Cunningham D.L."/>
            <person name="Heath J.K."/>
            <person name="Cooper H.J."/>
        </authorList>
    </citation>
    <scope>PHOSPHORYLATION [LARGE SCALE ANALYSIS] AT SER-39</scope>
    <scope>IDENTIFICATION BY MASS SPECTROMETRY [LARGE SCALE ANALYSIS]</scope>
    <source>
        <tissue>Embryonic fibroblast</tissue>
    </source>
</reference>
<reference key="7">
    <citation type="journal article" date="2010" name="Cell">
        <title>A tissue-specific atlas of mouse protein phosphorylation and expression.</title>
        <authorList>
            <person name="Huttlin E.L."/>
            <person name="Jedrychowski M.P."/>
            <person name="Elias J.E."/>
            <person name="Goswami T."/>
            <person name="Rad R."/>
            <person name="Beausoleil S.A."/>
            <person name="Villen J."/>
            <person name="Haas W."/>
            <person name="Sowa M.E."/>
            <person name="Gygi S.P."/>
        </authorList>
    </citation>
    <scope>PHOSPHORYLATION [LARGE SCALE ANALYSIS] AT SER-9; SER-11; SER-166; SER-178; SER-181; SER-182 AND THR-522</scope>
    <scope>IDENTIFICATION BY MASS SPECTROMETRY [LARGE SCALE ANALYSIS]</scope>
    <source>
        <tissue>Brain</tissue>
        <tissue>Brown adipose tissue</tissue>
        <tissue>Heart</tissue>
        <tissue>Kidney</tissue>
        <tissue>Liver</tissue>
        <tissue>Lung</tissue>
        <tissue>Pancreas</tissue>
        <tissue>Spleen</tissue>
        <tissue>Testis</tissue>
    </source>
</reference>
<reference key="8">
    <citation type="journal article" date="2013" name="Mol. Cell">
        <title>SIRT5-mediated lysine desuccinylation impacts diverse metabolic pathways.</title>
        <authorList>
            <person name="Park J."/>
            <person name="Chen Y."/>
            <person name="Tishkoff D.X."/>
            <person name="Peng C."/>
            <person name="Tan M."/>
            <person name="Dai L."/>
            <person name="Xie Z."/>
            <person name="Zhang Y."/>
            <person name="Zwaans B.M."/>
            <person name="Skinner M.E."/>
            <person name="Lombard D.B."/>
            <person name="Zhao Y."/>
        </authorList>
    </citation>
    <scope>ACETYLATION [LARGE SCALE ANALYSIS] AT LYS-99 AND LYS-641</scope>
    <scope>IDENTIFICATION BY MASS SPECTROMETRY [LARGE SCALE ANALYSIS]</scope>
    <source>
        <tissue>Embryonic fibroblast</tissue>
    </source>
</reference>
<feature type="chain" id="PRO_0000259425" description="Eukaryotic translation initiation factor 3 subunit C">
    <location>
        <begin position="1"/>
        <end position="911"/>
    </location>
</feature>
<feature type="domain" description="PCI" evidence="3">
    <location>
        <begin position="671"/>
        <end position="847"/>
    </location>
</feature>
<feature type="region of interest" description="Disordered" evidence="4">
    <location>
        <begin position="1"/>
        <end position="44"/>
    </location>
</feature>
<feature type="region of interest" description="Disordered" evidence="4">
    <location>
        <begin position="157"/>
        <end position="299"/>
    </location>
</feature>
<feature type="region of interest" description="Disordered" evidence="4">
    <location>
        <begin position="520"/>
        <end position="540"/>
    </location>
</feature>
<feature type="region of interest" description="Disordered" evidence="4">
    <location>
        <begin position="883"/>
        <end position="911"/>
    </location>
</feature>
<feature type="compositionally biased region" description="Low complexity" evidence="4">
    <location>
        <begin position="8"/>
        <end position="21"/>
    </location>
</feature>
<feature type="compositionally biased region" description="Acidic residues" evidence="4">
    <location>
        <begin position="166"/>
        <end position="190"/>
    </location>
</feature>
<feature type="compositionally biased region" description="Basic and acidic residues" evidence="4">
    <location>
        <begin position="199"/>
        <end position="208"/>
    </location>
</feature>
<feature type="compositionally biased region" description="Acidic residues" evidence="4">
    <location>
        <begin position="216"/>
        <end position="230"/>
    </location>
</feature>
<feature type="compositionally biased region" description="Basic and acidic residues" evidence="4">
    <location>
        <begin position="259"/>
        <end position="276"/>
    </location>
</feature>
<feature type="compositionally biased region" description="Polar residues" evidence="4">
    <location>
        <begin position="520"/>
        <end position="529"/>
    </location>
</feature>
<feature type="compositionally biased region" description="Basic and acidic residues" evidence="4">
    <location>
        <begin position="884"/>
        <end position="897"/>
    </location>
</feature>
<feature type="modified residue" description="Phosphoserine" evidence="9">
    <location>
        <position position="9"/>
    </location>
</feature>
<feature type="modified residue" description="Phosphoserine" evidence="9">
    <location>
        <position position="11"/>
    </location>
</feature>
<feature type="modified residue" description="Phosphoserine" evidence="1 2">
    <location>
        <position position="13"/>
    </location>
</feature>
<feature type="modified residue" description="Phosphoserine" evidence="1 2">
    <location>
        <position position="15"/>
    </location>
</feature>
<feature type="modified residue" description="Phosphoserine" evidence="1 2">
    <location>
        <position position="16"/>
    </location>
</feature>
<feature type="modified residue" description="Phosphoserine" evidence="1 2">
    <location>
        <position position="18"/>
    </location>
</feature>
<feature type="modified residue" description="Phosphoserine" evidence="7 8">
    <location>
        <position position="39"/>
    </location>
</feature>
<feature type="modified residue" description="N6-acetyllysine" evidence="10">
    <location>
        <position position="99"/>
    </location>
</feature>
<feature type="modified residue" description="Phosphoserine" evidence="9">
    <location>
        <position position="166"/>
    </location>
</feature>
<feature type="modified residue" description="Phosphoserine" evidence="9">
    <location>
        <position position="178"/>
    </location>
</feature>
<feature type="modified residue" description="Phosphoserine" evidence="9">
    <location>
        <position position="181"/>
    </location>
</feature>
<feature type="modified residue" description="Phosphoserine" evidence="9">
    <location>
        <position position="182"/>
    </location>
</feature>
<feature type="modified residue" description="Phosphothreonine" evidence="9">
    <location>
        <position position="522"/>
    </location>
</feature>
<feature type="modified residue" description="N6-acetyllysine" evidence="10">
    <location>
        <position position="641"/>
    </location>
</feature>
<feature type="modified residue" description="Phosphoserine" evidence="1 2">
    <location>
        <position position="907"/>
    </location>
</feature>
<feature type="sequence conflict" description="In Ref. 2; AAH25032." evidence="6" ref="2">
    <original>A</original>
    <variation>T</variation>
    <location>
        <position position="111"/>
    </location>
</feature>
<feature type="sequence conflict" description="In Ref. 2; AAH25032." evidence="6" ref="2">
    <original>E</original>
    <variation>L</variation>
    <location>
        <position position="894"/>
    </location>
</feature>
<dbReference type="EMBL" id="AK160078">
    <property type="protein sequence ID" value="BAE35610.1"/>
    <property type="molecule type" value="mRNA"/>
</dbReference>
<dbReference type="EMBL" id="BC024855">
    <property type="protein sequence ID" value="AAH24855.1"/>
    <property type="molecule type" value="mRNA"/>
</dbReference>
<dbReference type="EMBL" id="BC025032">
    <property type="protein sequence ID" value="AAH25032.1"/>
    <property type="molecule type" value="mRNA"/>
</dbReference>
<dbReference type="CCDS" id="CCDS21832.1"/>
<dbReference type="RefSeq" id="NP_666312.1">
    <property type="nucleotide sequence ID" value="NM_146200.1"/>
</dbReference>
<dbReference type="SMR" id="Q8R1B4"/>
<dbReference type="BioGRID" id="207913">
    <property type="interactions" value="45"/>
</dbReference>
<dbReference type="FunCoup" id="Q8R1B4">
    <property type="interactions" value="901"/>
</dbReference>
<dbReference type="IntAct" id="Q8R1B4">
    <property type="interactions" value="4"/>
</dbReference>
<dbReference type="MINT" id="Q8R1B4"/>
<dbReference type="STRING" id="10090.ENSMUSP00000032992"/>
<dbReference type="GlyGen" id="Q8R1B4">
    <property type="glycosylation" value="1 site, 1 O-linked glycan (1 site)"/>
</dbReference>
<dbReference type="iPTMnet" id="Q8R1B4"/>
<dbReference type="MetOSite" id="Q8R1B4"/>
<dbReference type="PhosphoSitePlus" id="Q8R1B4"/>
<dbReference type="SwissPalm" id="Q8R1B4"/>
<dbReference type="jPOST" id="Q8R1B4"/>
<dbReference type="PaxDb" id="10090-ENSMUSP00000032992"/>
<dbReference type="PeptideAtlas" id="Q8R1B4"/>
<dbReference type="ProteomicsDB" id="275520"/>
<dbReference type="Pumba" id="Q8R1B4"/>
<dbReference type="DNASU" id="56347"/>
<dbReference type="Ensembl" id="ENSMUST00000032992.7">
    <property type="protein sequence ID" value="ENSMUSP00000032992.5"/>
    <property type="gene ID" value="ENSMUSG00000030738.12"/>
</dbReference>
<dbReference type="GeneID" id="56347"/>
<dbReference type="KEGG" id="mmu:56347"/>
<dbReference type="UCSC" id="uc009jrw.1">
    <property type="organism name" value="mouse"/>
</dbReference>
<dbReference type="AGR" id="MGI:1926966"/>
<dbReference type="CTD" id="8663"/>
<dbReference type="MGI" id="MGI:1926966">
    <property type="gene designation" value="Eif3c"/>
</dbReference>
<dbReference type="VEuPathDB" id="HostDB:ENSMUSG00000030738"/>
<dbReference type="eggNOG" id="KOG1076">
    <property type="taxonomic scope" value="Eukaryota"/>
</dbReference>
<dbReference type="GeneTree" id="ENSGT00390000017900"/>
<dbReference type="HOGENOM" id="CLU_004304_0_0_1"/>
<dbReference type="InParanoid" id="Q8R1B4"/>
<dbReference type="OMA" id="FRCGLIK"/>
<dbReference type="OrthoDB" id="29647at2759"/>
<dbReference type="PhylomeDB" id="Q8R1B4"/>
<dbReference type="TreeFam" id="TF101520"/>
<dbReference type="Reactome" id="R-MMU-156827">
    <property type="pathway name" value="L13a-mediated translational silencing of Ceruloplasmin expression"/>
</dbReference>
<dbReference type="Reactome" id="R-MMU-72649">
    <property type="pathway name" value="Translation initiation complex formation"/>
</dbReference>
<dbReference type="Reactome" id="R-MMU-72689">
    <property type="pathway name" value="Formation of a pool of free 40S subunits"/>
</dbReference>
<dbReference type="Reactome" id="R-MMU-72695">
    <property type="pathway name" value="Formation of the ternary complex, and subsequently, the 43S complex"/>
</dbReference>
<dbReference type="Reactome" id="R-MMU-72702">
    <property type="pathway name" value="Ribosomal scanning and start codon recognition"/>
</dbReference>
<dbReference type="Reactome" id="R-MMU-72706">
    <property type="pathway name" value="GTP hydrolysis and joining of the 60S ribosomal subunit"/>
</dbReference>
<dbReference type="BioGRID-ORCS" id="56347">
    <property type="hits" value="26 hits in 77 CRISPR screens"/>
</dbReference>
<dbReference type="ChiTaRS" id="Eif3c">
    <property type="organism name" value="mouse"/>
</dbReference>
<dbReference type="PRO" id="PR:Q8R1B4"/>
<dbReference type="Proteomes" id="UP000000589">
    <property type="component" value="Chromosome 7"/>
</dbReference>
<dbReference type="RNAct" id="Q8R1B4">
    <property type="molecule type" value="protein"/>
</dbReference>
<dbReference type="Bgee" id="ENSMUSG00000030738">
    <property type="expression patterns" value="Expressed in embryonic post-anal tail and 267 other cell types or tissues"/>
</dbReference>
<dbReference type="ExpressionAtlas" id="Q8R1B4">
    <property type="expression patterns" value="baseline and differential"/>
</dbReference>
<dbReference type="GO" id="GO:0016282">
    <property type="term" value="C:eukaryotic 43S preinitiation complex"/>
    <property type="evidence" value="ECO:0007669"/>
    <property type="project" value="UniProtKB-UniRule"/>
</dbReference>
<dbReference type="GO" id="GO:0033290">
    <property type="term" value="C:eukaryotic 48S preinitiation complex"/>
    <property type="evidence" value="ECO:0007669"/>
    <property type="project" value="UniProtKB-UniRule"/>
</dbReference>
<dbReference type="GO" id="GO:0005852">
    <property type="term" value="C:eukaryotic translation initiation factor 3 complex"/>
    <property type="evidence" value="ECO:0000314"/>
    <property type="project" value="UniProtKB"/>
</dbReference>
<dbReference type="GO" id="GO:0071541">
    <property type="term" value="C:eukaryotic translation initiation factor 3 complex, eIF3m"/>
    <property type="evidence" value="ECO:0000314"/>
    <property type="project" value="MGI"/>
</dbReference>
<dbReference type="GO" id="GO:0043022">
    <property type="term" value="F:ribosome binding"/>
    <property type="evidence" value="ECO:0000266"/>
    <property type="project" value="MGI"/>
</dbReference>
<dbReference type="GO" id="GO:0003723">
    <property type="term" value="F:RNA binding"/>
    <property type="evidence" value="ECO:0007669"/>
    <property type="project" value="InterPro"/>
</dbReference>
<dbReference type="GO" id="GO:0003743">
    <property type="term" value="F:translation initiation factor activity"/>
    <property type="evidence" value="ECO:0000314"/>
    <property type="project" value="UniProtKB"/>
</dbReference>
<dbReference type="GO" id="GO:0031369">
    <property type="term" value="F:translation initiation factor binding"/>
    <property type="evidence" value="ECO:0007669"/>
    <property type="project" value="InterPro"/>
</dbReference>
<dbReference type="GO" id="GO:0001732">
    <property type="term" value="P:formation of cytoplasmic translation initiation complex"/>
    <property type="evidence" value="ECO:0007669"/>
    <property type="project" value="UniProtKB-UniRule"/>
</dbReference>
<dbReference type="GO" id="GO:0006413">
    <property type="term" value="P:translational initiation"/>
    <property type="evidence" value="ECO:0000314"/>
    <property type="project" value="UniProtKB"/>
</dbReference>
<dbReference type="FunFam" id="1.10.10.10:FF:000461">
    <property type="entry name" value="Eukaryotic translation initiation factor 3 subunit C"/>
    <property type="match status" value="1"/>
</dbReference>
<dbReference type="Gene3D" id="1.10.10.10">
    <property type="entry name" value="Winged helix-like DNA-binding domain superfamily/Winged helix DNA-binding domain"/>
    <property type="match status" value="1"/>
</dbReference>
<dbReference type="HAMAP" id="MF_03002">
    <property type="entry name" value="eIF3c"/>
    <property type="match status" value="1"/>
</dbReference>
<dbReference type="InterPro" id="IPR027516">
    <property type="entry name" value="EIF3C"/>
</dbReference>
<dbReference type="InterPro" id="IPR008905">
    <property type="entry name" value="EIF3C_N_dom"/>
</dbReference>
<dbReference type="InterPro" id="IPR000717">
    <property type="entry name" value="PCI_dom"/>
</dbReference>
<dbReference type="InterPro" id="IPR036388">
    <property type="entry name" value="WH-like_DNA-bd_sf"/>
</dbReference>
<dbReference type="InterPro" id="IPR036390">
    <property type="entry name" value="WH_DNA-bd_sf"/>
</dbReference>
<dbReference type="PANTHER" id="PTHR13937">
    <property type="entry name" value="EUKARYOTIC TRANSLATION INITATION FACTOR 3, SUBUNIT 8 EIF3S8 -RELATED"/>
    <property type="match status" value="1"/>
</dbReference>
<dbReference type="PANTHER" id="PTHR13937:SF0">
    <property type="entry name" value="EUKARYOTIC TRANSLATION INITIATION FACTOR 3 SUBUNIT C-RELATED"/>
    <property type="match status" value="1"/>
</dbReference>
<dbReference type="Pfam" id="PF05470">
    <property type="entry name" value="eIF-3c_N"/>
    <property type="match status" value="1"/>
</dbReference>
<dbReference type="Pfam" id="PF01399">
    <property type="entry name" value="PCI"/>
    <property type="match status" value="1"/>
</dbReference>
<dbReference type="SMART" id="SM00088">
    <property type="entry name" value="PINT"/>
    <property type="match status" value="1"/>
</dbReference>
<dbReference type="SUPFAM" id="SSF46785">
    <property type="entry name" value="Winged helix' DNA-binding domain"/>
    <property type="match status" value="1"/>
</dbReference>
<dbReference type="PROSITE" id="PS50250">
    <property type="entry name" value="PCI"/>
    <property type="match status" value="1"/>
</dbReference>
<accession>Q8R1B4</accession>
<accession>Q8R3M7</accession>
<sequence>MSRFFTTGSDSESESSLSGEELVTKPVSGNYGKQPLLLSEDEEDTKRVVRSAKDKRFEELTNLIRTIRNAMKIRDVTKCLEEFELLGKAYGKAKSIVDKEGVPRFYIRILADLEDYLNELWEDKEGKKKMNKNNAKALSTLRQKIRKYNRDFESHITNYKQNPEQSADEDAEKNEEDSEGSSDEDEDEDGVGNTTFLKKKQESSGESRKFHKKMEDDDEDSEDSEDEEWDTSSTSSDSDSEEEEGKQTVLASKFLKKAPTTEEDKKAAEKKREDKAKKKHDRKSKRLDEEEEDNEGGEWERVRGGVPLVKEKPKMFAKGTEITHAVVIKKLNEILQVRGKKGTDRATQIELLQLLVQIAAENNLGVGVIVKIKFNIIASLYDYNPNLATYMKPEMWQMCLDCINELMDTLVAHSNIFVGENILEESENLHNFDQPLRVRGCILTLVERMDEEFTKIMQNTDPHSQEYVEHLKDEAQVCAIIERVQRYLEEKGTTEEICQIYLRRILHTYYKFDYKAHQRQLTPPEGSSKSEQDQAENEGEDSAVLMERLCKYIYAKDRTDRIRTCAILCHIYHHALHSRWYQARDLMLMSHLQDNIQHADPPVQILYNRTMVQLGICAFRQGLTKDAHNALLDIQSSGRAKELLGQGLLLRSLQERNQEQEKVERRRQVPFHLHINLELLECVYLVSAMLLEIPYMAAHESDARRRMISKQFHHQLRVGERQPLLGPPESMREHVVAASKAMKMGDWKTCHSFIINEKMNGKVWDLFPEADKVRTMLVRKIQEESLRTYLFTYSSVYDSISMETLSDMFELDLPTVHSIISKMIINEELMASLDQPTQTVVMHRTEPTAQQNLALQLAEKLGSLVENNERVFDHKQGTYGGYFRDQKDGYRKNEGYMRRGGYRQQQSQTAY</sequence>
<evidence type="ECO:0000250" key="1">
    <source>
        <dbReference type="UniProtKB" id="Q99613"/>
    </source>
</evidence>
<evidence type="ECO:0000255" key="2">
    <source>
        <dbReference type="HAMAP-Rule" id="MF_03002"/>
    </source>
</evidence>
<evidence type="ECO:0000255" key="3">
    <source>
        <dbReference type="PROSITE-ProRule" id="PRU01185"/>
    </source>
</evidence>
<evidence type="ECO:0000256" key="4">
    <source>
        <dbReference type="SAM" id="MobiDB-lite"/>
    </source>
</evidence>
<evidence type="ECO:0000269" key="5">
    <source>
    </source>
</evidence>
<evidence type="ECO:0000305" key="6"/>
<evidence type="ECO:0007744" key="7">
    <source>
    </source>
</evidence>
<evidence type="ECO:0007744" key="8">
    <source>
    </source>
</evidence>
<evidence type="ECO:0007744" key="9">
    <source>
    </source>
</evidence>
<evidence type="ECO:0007744" key="10">
    <source>
    </source>
</evidence>
<comment type="function">
    <text evidence="2 5">Component of the eukaryotic translation initiation factor 3 (eIF-3) complex, which is required for several steps in the initiation of protein synthesis. The eIF-3 complex associates with the 40S ribosome and facilitates the recruitment of eIF-1, eIF-1A, eIF-2:GTP:methionyl-tRNAi and eIF-5 to form the 43S pre-initiation complex (43S PIC). The eIF-3 complex stimulates mRNA recruitment to the 43S PIC and scanning of the mRNA for AUG recognition. The eIF-3 complex is also required for disassembly and recycling of post-termination ribosomal complexes and subsequently prevents premature joining of the 40S and 60S ribosomal subunits prior to initiation. The eIF-3 complex specifically targets and initiates translation of a subset of mRNAs involved in cell proliferation, including cell cycling, differentiation and apoptosis, and uses different modes of RNA stem-loop binding to exert either translational activation or repression.</text>
</comment>
<comment type="subunit">
    <text evidence="1 2">Component of the eukaryotic translation initiation factor 3 (eIF-3) complex, which is composed of 13 subunits: EIF3A, EIF3B, EIF3C, EIF3D, EIF3E, EIF3F, EIF3G, EIF3H, EIF3I, EIF3J, EIF3K, EIF3L and EIF3M. The eIF-3 complex appears to include 3 stable modules: module A is composed of EIF3A, EIF3B, EIF3G and EIF3I; module B is composed of EIF3F, EIF3H, and EIF3M; and module C is composed of EIF3C, EIF3D, EIF3E, EIF3K and EIF3L. EIF3C of module C binds EIF3B of module A and EIF3H of module B, thereby linking the three modules. EIF3J is a labile subunit that binds to the eIF-3 complex via EIF3B. The eIF-3 complex may interact with RPS6KB1 under conditions of nutrient depletion. Mitogenic stimulation may lead to binding and activation of a complex composed of MTOR and RPTOR, leading to phosphorylation and release of RPS6KB1 and binding of EIF4B to eIF-3. Interacts with ALKBH4, IFIT1 and IFIT2 (By similarity). Interacts with BZW2/5MP1 (By similarity).</text>
</comment>
<comment type="subcellular location">
    <subcellularLocation>
        <location evidence="2">Cytoplasm</location>
    </subcellularLocation>
</comment>
<comment type="PTM">
    <text evidence="2">Phosphorylated. Phosphorylation is enhanced upon serum stimulation.</text>
</comment>
<comment type="similarity">
    <text evidence="2">Belongs to the eIF-3 subunit C family.</text>
</comment>
<proteinExistence type="evidence at protein level"/>
<gene>
    <name type="primary">Eif3c</name>
    <name type="synonym">Eif3s8</name>
</gene>